<sequence length="114" mass="13085">KPKEDREWEKFKTKHITSQSVADFNCNRTMNDPAYTPDGQCKPINTFIHSTTGPVKEICRRATGRVNKSSTQQFTLTTCKNPIRCKYSQSNTTNFICITCRDNYPVHFVKTGKC</sequence>
<organism>
    <name type="scientific">Lithobates pipiens</name>
    <name type="common">Northern leopard frog</name>
    <name type="synonym">Rana pipiens</name>
    <dbReference type="NCBI Taxonomy" id="8404"/>
    <lineage>
        <taxon>Eukaryota</taxon>
        <taxon>Metazoa</taxon>
        <taxon>Chordata</taxon>
        <taxon>Craniata</taxon>
        <taxon>Vertebrata</taxon>
        <taxon>Euteleostomi</taxon>
        <taxon>Amphibia</taxon>
        <taxon>Batrachia</taxon>
        <taxon>Anura</taxon>
        <taxon>Neobatrachia</taxon>
        <taxon>Ranoidea</taxon>
        <taxon>Ranidae</taxon>
        <taxon>Lithobates</taxon>
    </lineage>
</organism>
<accession>P85073</accession>
<evidence type="ECO:0000250" key="1">
    <source>
        <dbReference type="UniProtKB" id="P11916"/>
    </source>
</evidence>
<evidence type="ECO:0000255" key="2"/>
<evidence type="ECO:0000269" key="3">
    <source>
    </source>
</evidence>
<evidence type="ECO:0000305" key="4"/>
<evidence type="ECO:0007829" key="5">
    <source>
        <dbReference type="PDB" id="2P6Z"/>
    </source>
</evidence>
<evidence type="ECO:0007829" key="6">
    <source>
        <dbReference type="PDB" id="2P7S"/>
    </source>
</evidence>
<comment type="function">
    <text evidence="3">Endonuclease, hydrolyzes highly polymerized RNA, poly(U) and poly(C), and the dinucleotides CpA and UpA. Hydrolyzes 18S and 28S ribosomal RNA. More active towards rCA than rUA or rUG. Has cytotoxic activity against cultured human submaxillary gland carcinoma cells.</text>
</comment>
<comment type="subunit">
    <text evidence="3">Monomer.</text>
</comment>
<comment type="subcellular location">
    <subcellularLocation>
        <location evidence="4">Secreted</location>
    </subcellularLocation>
</comment>
<comment type="PTM">
    <text evidence="3">There are at least four different forms arising from glycan heterogeneity.</text>
</comment>
<comment type="mass spectrometry" mass="14012.0" error="1.0" method="Electrospray" evidence="3">
    <text>Major (most represented) glycoform 1.</text>
</comment>
<comment type="mass spectrometry" mass="14378.0" error="1.0" method="Electrospray" evidence="3">
    <text>Major (second-most represented) glycoform 2.</text>
</comment>
<comment type="mass spectrometry" mass="13809.0" error="1.0" method="Electrospray" evidence="3">
    <text>Minor glycoform 3.</text>
</comment>
<comment type="mass spectrometry" mass="14539.0" error="1.0" method="Electrospray" evidence="3">
    <text>Minor glycoform 4.</text>
</comment>
<comment type="similarity">
    <text evidence="2">Belongs to the pancreatic ribonuclease family.</text>
</comment>
<dbReference type="EC" id="3.1.27.-"/>
<dbReference type="PDB" id="2P6Z">
    <property type="method" value="X-ray"/>
    <property type="resolution" value="1.93 A"/>
    <property type="chains" value="A/B=1-114"/>
</dbReference>
<dbReference type="PDB" id="2P7S">
    <property type="method" value="X-ray"/>
    <property type="resolution" value="1.80 A"/>
    <property type="chains" value="A=1-114"/>
</dbReference>
<dbReference type="PDBsum" id="2P6Z"/>
<dbReference type="PDBsum" id="2P7S"/>
<dbReference type="SMR" id="P85073"/>
<dbReference type="iPTMnet" id="P85073"/>
<dbReference type="EvolutionaryTrace" id="P85073"/>
<dbReference type="GO" id="GO:0005576">
    <property type="term" value="C:extracellular region"/>
    <property type="evidence" value="ECO:0007669"/>
    <property type="project" value="UniProtKB-SubCell"/>
</dbReference>
<dbReference type="GO" id="GO:0004519">
    <property type="term" value="F:endonuclease activity"/>
    <property type="evidence" value="ECO:0007669"/>
    <property type="project" value="UniProtKB-KW"/>
</dbReference>
<dbReference type="GO" id="GO:0003676">
    <property type="term" value="F:nucleic acid binding"/>
    <property type="evidence" value="ECO:0007669"/>
    <property type="project" value="InterPro"/>
</dbReference>
<dbReference type="GO" id="GO:0004540">
    <property type="term" value="F:RNA nuclease activity"/>
    <property type="evidence" value="ECO:0007669"/>
    <property type="project" value="TreeGrafter"/>
</dbReference>
<dbReference type="GO" id="GO:0050830">
    <property type="term" value="P:defense response to Gram-positive bacterium"/>
    <property type="evidence" value="ECO:0007669"/>
    <property type="project" value="TreeGrafter"/>
</dbReference>
<dbReference type="CDD" id="cd06265">
    <property type="entry name" value="RNase_A_canonical"/>
    <property type="match status" value="1"/>
</dbReference>
<dbReference type="Gene3D" id="3.10.130.10">
    <property type="entry name" value="Ribonuclease A-like domain"/>
    <property type="match status" value="1"/>
</dbReference>
<dbReference type="InterPro" id="IPR001427">
    <property type="entry name" value="RNaseA"/>
</dbReference>
<dbReference type="InterPro" id="IPR036816">
    <property type="entry name" value="RNaseA-like_dom_sf"/>
</dbReference>
<dbReference type="InterPro" id="IPR023411">
    <property type="entry name" value="RNaseA_AS"/>
</dbReference>
<dbReference type="InterPro" id="IPR023412">
    <property type="entry name" value="RNaseA_domain"/>
</dbReference>
<dbReference type="PANTHER" id="PTHR11437">
    <property type="entry name" value="RIBONUCLEASE"/>
    <property type="match status" value="1"/>
</dbReference>
<dbReference type="Pfam" id="PF00074">
    <property type="entry name" value="RnaseA"/>
    <property type="match status" value="1"/>
</dbReference>
<dbReference type="SMART" id="SM00092">
    <property type="entry name" value="RNAse_Pc"/>
    <property type="match status" value="1"/>
</dbReference>
<dbReference type="SUPFAM" id="SSF54076">
    <property type="entry name" value="RNase A-like"/>
    <property type="match status" value="1"/>
</dbReference>
<dbReference type="PROSITE" id="PS00127">
    <property type="entry name" value="RNASE_PANCREATIC"/>
    <property type="match status" value="1"/>
</dbReference>
<keyword id="KW-0002">3D-structure</keyword>
<keyword id="KW-0903">Direct protein sequencing</keyword>
<keyword id="KW-1015">Disulfide bond</keyword>
<keyword id="KW-0255">Endonuclease</keyword>
<keyword id="KW-0325">Glycoprotein</keyword>
<keyword id="KW-0378">Hydrolase</keyword>
<keyword id="KW-0540">Nuclease</keyword>
<keyword id="KW-0964">Secreted</keyword>
<protein>
    <recommendedName>
        <fullName>Amphinase-2</fullName>
        <ecNumber>3.1.27.-</ecNumber>
    </recommendedName>
</protein>
<name>AMPS2_LITPI</name>
<feature type="chain" id="PRO_0000291308" description="Amphinase-2">
    <location>
        <begin position="1"/>
        <end position="114"/>
    </location>
</feature>
<feature type="active site" description="Proton acceptor" evidence="1">
    <location>
        <position position="15"/>
    </location>
</feature>
<feature type="active site" description="Proton donor" evidence="1">
    <location>
        <position position="107"/>
    </location>
</feature>
<feature type="binding site" evidence="1">
    <location>
        <begin position="42"/>
        <end position="46"/>
    </location>
    <ligand>
        <name>substrate</name>
    </ligand>
</feature>
<feature type="glycosylation site" description="N-linked (GlcNAc...) asparagine" evidence="3">
    <location>
        <position position="27"/>
    </location>
</feature>
<feature type="glycosylation site" description="N-linked (GlcNAc...) asparagine" evidence="2">
    <location>
        <position position="67"/>
    </location>
</feature>
<feature type="glycosylation site" description="N-linked (GlcNAc...) asparagine" evidence="2">
    <location>
        <position position="91"/>
    </location>
</feature>
<feature type="disulfide bond" evidence="3">
    <location>
        <begin position="26"/>
        <end position="79"/>
    </location>
</feature>
<feature type="disulfide bond" evidence="3">
    <location>
        <begin position="41"/>
        <end position="85"/>
    </location>
</feature>
<feature type="disulfide bond" evidence="3">
    <location>
        <begin position="59"/>
        <end position="100"/>
    </location>
</feature>
<feature type="disulfide bond" evidence="3">
    <location>
        <begin position="97"/>
        <end position="114"/>
    </location>
</feature>
<feature type="helix" evidence="6">
    <location>
        <begin position="6"/>
        <end position="15"/>
    </location>
</feature>
<feature type="turn" evidence="6">
    <location>
        <begin position="21"/>
        <end position="23"/>
    </location>
</feature>
<feature type="helix" evidence="6">
    <location>
        <begin position="26"/>
        <end position="29"/>
    </location>
</feature>
<feature type="helix" evidence="5">
    <location>
        <begin position="33"/>
        <end position="35"/>
    </location>
</feature>
<feature type="strand" evidence="6">
    <location>
        <begin position="45"/>
        <end position="50"/>
    </location>
</feature>
<feature type="helix" evidence="6">
    <location>
        <begin position="52"/>
        <end position="56"/>
    </location>
</feature>
<feature type="helix" evidence="6">
    <location>
        <begin position="57"/>
        <end position="59"/>
    </location>
</feature>
<feature type="strand" evidence="6">
    <location>
        <begin position="64"/>
        <end position="69"/>
    </location>
</feature>
<feature type="strand" evidence="6">
    <location>
        <begin position="74"/>
        <end position="83"/>
    </location>
</feature>
<feature type="strand" evidence="6">
    <location>
        <begin position="86"/>
        <end position="94"/>
    </location>
</feature>
<feature type="strand" evidence="6">
    <location>
        <begin position="96"/>
        <end position="101"/>
    </location>
</feature>
<feature type="strand" evidence="6">
    <location>
        <begin position="104"/>
        <end position="112"/>
    </location>
</feature>
<proteinExistence type="evidence at protein level"/>
<reference key="1">
    <citation type="journal article" date="2007" name="J. Mol. Biol.">
        <title>Enzymatic and structural characterisation of amphinase, a novel cytotoxic ribonuclease from Rana pipiens oocytes.</title>
        <authorList>
            <person name="Singh U.P."/>
            <person name="Ardelt W."/>
            <person name="Saxena S.K."/>
            <person name="Holloway D.E."/>
            <person name="Vidunas E."/>
            <person name="Lee H.-S."/>
            <person name="Saxena A."/>
            <person name="Shogen K."/>
            <person name="Acharya K.R."/>
        </authorList>
    </citation>
    <scope>PROTEIN SEQUENCE</scope>
    <scope>X-RAY CRYSTALLOGRAPHY (1.8 ANGSTROMS)</scope>
    <scope>FUNCTION</scope>
    <scope>SUBUNIT</scope>
    <scope>MASS SPECTROMETRY</scope>
    <scope>GLYCOSYLATION AT ASN-27</scope>
    <scope>DISULFIDE BONDS</scope>
    <source>
        <tissue>Oocyte</tissue>
    </source>
</reference>